<sequence length="180" mass="21704">MVRESIPKEGENIKIQSYKHDGKIHRVWSETTILKGTDHVVIGGNDHTLVTESDGRTWITREPAIVYFHSEYWFNVICMFREDGIYYYCNLSSPFVCDEEALKYIDYDLDIKVYPNGKYHLLDEDEYEQHMNQMNYPHDIDIILRRNVDILQQWIEQKKGPFAPDFIKVWKERYKKIRQY</sequence>
<accession>A8YY39</accession>
<reference key="1">
    <citation type="journal article" date="2007" name="BMC Microbiol.">
        <title>Subtle genetic changes enhance virulence of methicillin resistant and sensitive Staphylococcus aureus.</title>
        <authorList>
            <person name="Highlander S.K."/>
            <person name="Hulten K.G."/>
            <person name="Qin X."/>
            <person name="Jiang H."/>
            <person name="Yerrapragada S."/>
            <person name="Mason E.O. Jr."/>
            <person name="Shang Y."/>
            <person name="Williams T.M."/>
            <person name="Fortunov R.M."/>
            <person name="Liu Y."/>
            <person name="Igboeli O."/>
            <person name="Petrosino J."/>
            <person name="Tirumalai M."/>
            <person name="Uzman A."/>
            <person name="Fox G.E."/>
            <person name="Cardenas A.M."/>
            <person name="Muzny D.M."/>
            <person name="Hemphill L."/>
            <person name="Ding Y."/>
            <person name="Dugan S."/>
            <person name="Blyth P.R."/>
            <person name="Buhay C.J."/>
            <person name="Dinh H.H."/>
            <person name="Hawes A.C."/>
            <person name="Holder M."/>
            <person name="Kovar C.L."/>
            <person name="Lee S.L."/>
            <person name="Liu W."/>
            <person name="Nazareth L.V."/>
            <person name="Wang Q."/>
            <person name="Zhou J."/>
            <person name="Kaplan S.L."/>
            <person name="Weinstock G.M."/>
        </authorList>
    </citation>
    <scope>NUCLEOTIDE SEQUENCE [LARGE SCALE GENOMIC DNA]</scope>
    <source>
        <strain>USA300 / TCH1516</strain>
    </source>
</reference>
<comment type="function">
    <text evidence="1">Has nucleoside phosphatase activity towards nucleoside triphosphates and nucleoside diphosphates.</text>
</comment>
<comment type="catalytic activity">
    <reaction evidence="1">
        <text>a ribonucleoside 5'-triphosphate + H2O = a ribonucleoside 5'-diphosphate + phosphate + H(+)</text>
        <dbReference type="Rhea" id="RHEA:23680"/>
        <dbReference type="ChEBI" id="CHEBI:15377"/>
        <dbReference type="ChEBI" id="CHEBI:15378"/>
        <dbReference type="ChEBI" id="CHEBI:43474"/>
        <dbReference type="ChEBI" id="CHEBI:57930"/>
        <dbReference type="ChEBI" id="CHEBI:61557"/>
        <dbReference type="EC" id="3.6.1.15"/>
    </reaction>
</comment>
<comment type="catalytic activity">
    <reaction evidence="1">
        <text>a ribonucleoside 5'-diphosphate + H2O = a ribonucleoside 5'-phosphate + phosphate + H(+)</text>
        <dbReference type="Rhea" id="RHEA:36799"/>
        <dbReference type="ChEBI" id="CHEBI:15377"/>
        <dbReference type="ChEBI" id="CHEBI:15378"/>
        <dbReference type="ChEBI" id="CHEBI:43474"/>
        <dbReference type="ChEBI" id="CHEBI:57930"/>
        <dbReference type="ChEBI" id="CHEBI:58043"/>
        <dbReference type="EC" id="3.6.1.6"/>
    </reaction>
</comment>
<comment type="cofactor">
    <cofactor evidence="1">
        <name>Mg(2+)</name>
        <dbReference type="ChEBI" id="CHEBI:18420"/>
    </cofactor>
</comment>
<comment type="similarity">
    <text evidence="1">Belongs to the Ntdp family.</text>
</comment>
<name>NTDP_STAAT</name>
<evidence type="ECO:0000255" key="1">
    <source>
        <dbReference type="HAMAP-Rule" id="MF_01568"/>
    </source>
</evidence>
<proteinExistence type="inferred from homology"/>
<organism>
    <name type="scientific">Staphylococcus aureus (strain USA300 / TCH1516)</name>
    <dbReference type="NCBI Taxonomy" id="451516"/>
    <lineage>
        <taxon>Bacteria</taxon>
        <taxon>Bacillati</taxon>
        <taxon>Bacillota</taxon>
        <taxon>Bacilli</taxon>
        <taxon>Bacillales</taxon>
        <taxon>Staphylococcaceae</taxon>
        <taxon>Staphylococcus</taxon>
    </lineage>
</organism>
<keyword id="KW-0378">Hydrolase</keyword>
<keyword id="KW-0460">Magnesium</keyword>
<keyword id="KW-0479">Metal-binding</keyword>
<feature type="chain" id="PRO_1000087830" description="Nucleoside triphosphate/diphosphate phosphatase">
    <location>
        <begin position="1"/>
        <end position="180"/>
    </location>
</feature>
<feature type="active site" description="Proton donor" evidence="1">
    <location>
        <position position="26"/>
    </location>
</feature>
<feature type="binding site" evidence="1">
    <location>
        <position position="90"/>
    </location>
    <ligand>
        <name>Mg(2+)</name>
        <dbReference type="ChEBI" id="CHEBI:18420"/>
        <label>1</label>
    </ligand>
</feature>
<feature type="binding site" evidence="1">
    <location>
        <position position="106"/>
    </location>
    <ligand>
        <name>Mg(2+)</name>
        <dbReference type="ChEBI" id="CHEBI:18420"/>
        <label>1</label>
    </ligand>
</feature>
<feature type="binding site" evidence="1">
    <location>
        <position position="108"/>
    </location>
    <ligand>
        <name>Mg(2+)</name>
        <dbReference type="ChEBI" id="CHEBI:18420"/>
        <label>2</label>
    </ligand>
</feature>
<feature type="binding site" evidence="1">
    <location>
        <position position="110"/>
    </location>
    <ligand>
        <name>Mg(2+)</name>
        <dbReference type="ChEBI" id="CHEBI:18420"/>
        <label>1</label>
    </ligand>
</feature>
<feature type="binding site" evidence="1">
    <location>
        <position position="110"/>
    </location>
    <ligand>
        <name>Mg(2+)</name>
        <dbReference type="ChEBI" id="CHEBI:18420"/>
        <label>2</label>
    </ligand>
</feature>
<feature type="binding site" evidence="1">
    <location>
        <position position="123"/>
    </location>
    <ligand>
        <name>Mg(2+)</name>
        <dbReference type="ChEBI" id="CHEBI:18420"/>
        <label>2</label>
    </ligand>
</feature>
<feature type="binding site" evidence="1">
    <location>
        <position position="126"/>
    </location>
    <ligand>
        <name>Mg(2+)</name>
        <dbReference type="ChEBI" id="CHEBI:18420"/>
        <label>2</label>
    </ligand>
</feature>
<protein>
    <recommendedName>
        <fullName evidence="1">Nucleoside triphosphate/diphosphate phosphatase</fullName>
        <ecNumber evidence="1">3.6.1.15</ecNumber>
        <ecNumber evidence="1">3.6.1.6</ecNumber>
    </recommendedName>
</protein>
<dbReference type="EC" id="3.6.1.15" evidence="1"/>
<dbReference type="EC" id="3.6.1.6" evidence="1"/>
<dbReference type="EMBL" id="CP000730">
    <property type="protein sequence ID" value="ABX29865.1"/>
    <property type="molecule type" value="Genomic_DNA"/>
</dbReference>
<dbReference type="RefSeq" id="WP_000251253.1">
    <property type="nucleotide sequence ID" value="NC_010079.1"/>
</dbReference>
<dbReference type="SMR" id="A8YY39"/>
<dbReference type="KEGG" id="sax:USA300HOU_1862"/>
<dbReference type="HOGENOM" id="CLU_109787_1_0_9"/>
<dbReference type="BioCyc" id="SAUR451516-HMP:GTV5-1926-MONOMER"/>
<dbReference type="GO" id="GO:0000287">
    <property type="term" value="F:magnesium ion binding"/>
    <property type="evidence" value="ECO:0007669"/>
    <property type="project" value="UniProtKB-UniRule"/>
</dbReference>
<dbReference type="GO" id="GO:0017110">
    <property type="term" value="F:nucleoside diphosphate phosphatase activity"/>
    <property type="evidence" value="ECO:0007669"/>
    <property type="project" value="UniProtKB-UniRule"/>
</dbReference>
<dbReference type="GO" id="GO:0017111">
    <property type="term" value="F:ribonucleoside triphosphate phosphatase activity"/>
    <property type="evidence" value="ECO:0007669"/>
    <property type="project" value="UniProtKB-UniRule"/>
</dbReference>
<dbReference type="Gene3D" id="2.40.380.10">
    <property type="entry name" value="FomD-like"/>
    <property type="match status" value="1"/>
</dbReference>
<dbReference type="HAMAP" id="MF_01568">
    <property type="entry name" value="Ntdp"/>
    <property type="match status" value="1"/>
</dbReference>
<dbReference type="InterPro" id="IPR007295">
    <property type="entry name" value="DUF402"/>
</dbReference>
<dbReference type="InterPro" id="IPR035930">
    <property type="entry name" value="FomD-like_sf"/>
</dbReference>
<dbReference type="InterPro" id="IPR050212">
    <property type="entry name" value="Ntdp-like"/>
</dbReference>
<dbReference type="InterPro" id="IPR016882">
    <property type="entry name" value="SA1684"/>
</dbReference>
<dbReference type="NCBIfam" id="NF010183">
    <property type="entry name" value="PRK13662.1"/>
    <property type="match status" value="1"/>
</dbReference>
<dbReference type="PANTHER" id="PTHR39159">
    <property type="match status" value="1"/>
</dbReference>
<dbReference type="PANTHER" id="PTHR39159:SF1">
    <property type="entry name" value="UPF0374 PROTEIN YGAC"/>
    <property type="match status" value="1"/>
</dbReference>
<dbReference type="Pfam" id="PF04167">
    <property type="entry name" value="DUF402"/>
    <property type="match status" value="1"/>
</dbReference>
<dbReference type="PIRSF" id="PIRSF028345">
    <property type="entry name" value="UCP028345"/>
    <property type="match status" value="1"/>
</dbReference>
<dbReference type="SUPFAM" id="SSF159234">
    <property type="entry name" value="FomD-like"/>
    <property type="match status" value="1"/>
</dbReference>
<gene>
    <name type="ordered locus">USA300HOU_1862</name>
</gene>